<name>LGT_PSEFS</name>
<sequence>MLPYPQIDPVALAIGPLKIHWYGLMYLIGIGGAWFLASRRLNRFDPTWTKEKLSDLIFWLSMGVIVGGRLGYVLFYDLPAYIANPTLIFEVWKGGMAFHGGFIGVMIAAWWFGRRNGKSFFQLMDFVAPMVPIGLGAGRIGNFINAELWGKPTDVPWAMIFPPFSDPAQLPRHPSQLYQFALEGVALFLILYIFSRKPRPTMAVSGMFALFYGIFRFVVEFVRVPDAQLGYLAFGWVTMGQILSLPMILGGLGLLWWAYNRPQPLKNTAL</sequence>
<organism>
    <name type="scientific">Pseudomonas fluorescens (strain SBW25)</name>
    <dbReference type="NCBI Taxonomy" id="216595"/>
    <lineage>
        <taxon>Bacteria</taxon>
        <taxon>Pseudomonadati</taxon>
        <taxon>Pseudomonadota</taxon>
        <taxon>Gammaproteobacteria</taxon>
        <taxon>Pseudomonadales</taxon>
        <taxon>Pseudomonadaceae</taxon>
        <taxon>Pseudomonas</taxon>
    </lineage>
</organism>
<gene>
    <name evidence="1" type="primary">lgt</name>
    <name type="ordered locus">PFLU_5816</name>
</gene>
<feature type="chain" id="PRO_1000213656" description="Phosphatidylglycerol--prolipoprotein diacylglyceryl transferase">
    <location>
        <begin position="1"/>
        <end position="270"/>
    </location>
</feature>
<feature type="transmembrane region" description="Helical" evidence="1">
    <location>
        <begin position="10"/>
        <end position="30"/>
    </location>
</feature>
<feature type="transmembrane region" description="Helical" evidence="1">
    <location>
        <begin position="56"/>
        <end position="76"/>
    </location>
</feature>
<feature type="transmembrane region" description="Helical" evidence="1">
    <location>
        <begin position="92"/>
        <end position="112"/>
    </location>
</feature>
<feature type="transmembrane region" description="Helical" evidence="1">
    <location>
        <begin position="120"/>
        <end position="140"/>
    </location>
</feature>
<feature type="transmembrane region" description="Helical" evidence="1">
    <location>
        <begin position="174"/>
        <end position="194"/>
    </location>
</feature>
<feature type="transmembrane region" description="Helical" evidence="1">
    <location>
        <begin position="202"/>
        <end position="222"/>
    </location>
</feature>
<feature type="transmembrane region" description="Helical" evidence="1">
    <location>
        <begin position="236"/>
        <end position="256"/>
    </location>
</feature>
<feature type="binding site" evidence="1">
    <location>
        <position position="139"/>
    </location>
    <ligand>
        <name>a 1,2-diacyl-sn-glycero-3-phospho-(1'-sn-glycerol)</name>
        <dbReference type="ChEBI" id="CHEBI:64716"/>
    </ligand>
</feature>
<comment type="function">
    <text evidence="1">Catalyzes the transfer of the diacylglyceryl group from phosphatidylglycerol to the sulfhydryl group of the N-terminal cysteine of a prolipoprotein, the first step in the formation of mature lipoproteins.</text>
</comment>
<comment type="catalytic activity">
    <reaction evidence="1">
        <text>L-cysteinyl-[prolipoprotein] + a 1,2-diacyl-sn-glycero-3-phospho-(1'-sn-glycerol) = an S-1,2-diacyl-sn-glyceryl-L-cysteinyl-[prolipoprotein] + sn-glycerol 1-phosphate + H(+)</text>
        <dbReference type="Rhea" id="RHEA:56712"/>
        <dbReference type="Rhea" id="RHEA-COMP:14679"/>
        <dbReference type="Rhea" id="RHEA-COMP:14680"/>
        <dbReference type="ChEBI" id="CHEBI:15378"/>
        <dbReference type="ChEBI" id="CHEBI:29950"/>
        <dbReference type="ChEBI" id="CHEBI:57685"/>
        <dbReference type="ChEBI" id="CHEBI:64716"/>
        <dbReference type="ChEBI" id="CHEBI:140658"/>
        <dbReference type="EC" id="2.5.1.145"/>
    </reaction>
</comment>
<comment type="pathway">
    <text evidence="1">Protein modification; lipoprotein biosynthesis (diacylglyceryl transfer).</text>
</comment>
<comment type="subcellular location">
    <subcellularLocation>
        <location evidence="1">Cell inner membrane</location>
        <topology evidence="1">Multi-pass membrane protein</topology>
    </subcellularLocation>
</comment>
<comment type="similarity">
    <text evidence="1">Belongs to the Lgt family.</text>
</comment>
<dbReference type="EC" id="2.5.1.145" evidence="1"/>
<dbReference type="EMBL" id="AM181176">
    <property type="protein sequence ID" value="CAY53233.1"/>
    <property type="molecule type" value="Genomic_DNA"/>
</dbReference>
<dbReference type="RefSeq" id="WP_015886390.1">
    <property type="nucleotide sequence ID" value="NC_012660.1"/>
</dbReference>
<dbReference type="SMR" id="C3K3Q9"/>
<dbReference type="STRING" id="294.SRM1_05523"/>
<dbReference type="GeneID" id="93467445"/>
<dbReference type="PATRIC" id="fig|216595.4.peg.5937"/>
<dbReference type="eggNOG" id="COG0682">
    <property type="taxonomic scope" value="Bacteria"/>
</dbReference>
<dbReference type="HOGENOM" id="CLU_013386_1_0_6"/>
<dbReference type="OrthoDB" id="871140at2"/>
<dbReference type="UniPathway" id="UPA00664"/>
<dbReference type="GO" id="GO:0005886">
    <property type="term" value="C:plasma membrane"/>
    <property type="evidence" value="ECO:0007669"/>
    <property type="project" value="UniProtKB-SubCell"/>
</dbReference>
<dbReference type="GO" id="GO:0008961">
    <property type="term" value="F:phosphatidylglycerol-prolipoprotein diacylglyceryl transferase activity"/>
    <property type="evidence" value="ECO:0007669"/>
    <property type="project" value="UniProtKB-UniRule"/>
</dbReference>
<dbReference type="GO" id="GO:0042158">
    <property type="term" value="P:lipoprotein biosynthetic process"/>
    <property type="evidence" value="ECO:0007669"/>
    <property type="project" value="UniProtKB-UniRule"/>
</dbReference>
<dbReference type="HAMAP" id="MF_01147">
    <property type="entry name" value="Lgt"/>
    <property type="match status" value="1"/>
</dbReference>
<dbReference type="InterPro" id="IPR001640">
    <property type="entry name" value="Lgt"/>
</dbReference>
<dbReference type="NCBIfam" id="TIGR00544">
    <property type="entry name" value="lgt"/>
    <property type="match status" value="1"/>
</dbReference>
<dbReference type="PANTHER" id="PTHR30589:SF0">
    <property type="entry name" value="PHOSPHATIDYLGLYCEROL--PROLIPOPROTEIN DIACYLGLYCERYL TRANSFERASE"/>
    <property type="match status" value="1"/>
</dbReference>
<dbReference type="PANTHER" id="PTHR30589">
    <property type="entry name" value="PROLIPOPROTEIN DIACYLGLYCERYL TRANSFERASE"/>
    <property type="match status" value="1"/>
</dbReference>
<dbReference type="Pfam" id="PF01790">
    <property type="entry name" value="LGT"/>
    <property type="match status" value="1"/>
</dbReference>
<dbReference type="PROSITE" id="PS01311">
    <property type="entry name" value="LGT"/>
    <property type="match status" value="1"/>
</dbReference>
<evidence type="ECO:0000255" key="1">
    <source>
        <dbReference type="HAMAP-Rule" id="MF_01147"/>
    </source>
</evidence>
<reference key="1">
    <citation type="journal article" date="2009" name="Genome Biol.">
        <title>Genomic and genetic analyses of diversity and plant interactions of Pseudomonas fluorescens.</title>
        <authorList>
            <person name="Silby M.W."/>
            <person name="Cerdeno-Tarraga A.M."/>
            <person name="Vernikos G.S."/>
            <person name="Giddens S.R."/>
            <person name="Jackson R.W."/>
            <person name="Preston G.M."/>
            <person name="Zhang X.-X."/>
            <person name="Moon C.D."/>
            <person name="Gehrig S.M."/>
            <person name="Godfrey S.A.C."/>
            <person name="Knight C.G."/>
            <person name="Malone J.G."/>
            <person name="Robinson Z."/>
            <person name="Spiers A.J."/>
            <person name="Harris S."/>
            <person name="Challis G.L."/>
            <person name="Yaxley A.M."/>
            <person name="Harris D."/>
            <person name="Seeger K."/>
            <person name="Murphy L."/>
            <person name="Rutter S."/>
            <person name="Squares R."/>
            <person name="Quail M.A."/>
            <person name="Saunders E."/>
            <person name="Mavromatis K."/>
            <person name="Brettin T.S."/>
            <person name="Bentley S.D."/>
            <person name="Hothersall J."/>
            <person name="Stephens E."/>
            <person name="Thomas C.M."/>
            <person name="Parkhill J."/>
            <person name="Levy S.B."/>
            <person name="Rainey P.B."/>
            <person name="Thomson N.R."/>
        </authorList>
    </citation>
    <scope>NUCLEOTIDE SEQUENCE [LARGE SCALE GENOMIC DNA]</scope>
    <source>
        <strain>SBW25</strain>
    </source>
</reference>
<proteinExistence type="inferred from homology"/>
<keyword id="KW-0997">Cell inner membrane</keyword>
<keyword id="KW-1003">Cell membrane</keyword>
<keyword id="KW-0472">Membrane</keyword>
<keyword id="KW-0808">Transferase</keyword>
<keyword id="KW-0812">Transmembrane</keyword>
<keyword id="KW-1133">Transmembrane helix</keyword>
<protein>
    <recommendedName>
        <fullName evidence="1">Phosphatidylglycerol--prolipoprotein diacylglyceryl transferase</fullName>
        <ecNumber evidence="1">2.5.1.145</ecNumber>
    </recommendedName>
</protein>
<accession>C3K3Q9</accession>